<dbReference type="EMBL" id="L43967">
    <property type="protein sequence ID" value="AAC71588.1"/>
    <property type="molecule type" value="Genomic_DNA"/>
</dbReference>
<dbReference type="EMBL" id="U02206">
    <property type="protein sequence ID" value="AAD12497.1"/>
    <property type="molecule type" value="Genomic_DNA"/>
</dbReference>
<dbReference type="PIR" id="A64240">
    <property type="entry name" value="A64240"/>
</dbReference>
<dbReference type="RefSeq" id="WP_009885819.1">
    <property type="nucleotide sequence ID" value="NC_000908.2"/>
</dbReference>
<dbReference type="SMR" id="P36255"/>
<dbReference type="FunCoup" id="P36255">
    <property type="interactions" value="213"/>
</dbReference>
<dbReference type="STRING" id="243273.MG_362"/>
<dbReference type="GeneID" id="88282545"/>
<dbReference type="KEGG" id="mge:MG_362"/>
<dbReference type="eggNOG" id="COG0222">
    <property type="taxonomic scope" value="Bacteria"/>
</dbReference>
<dbReference type="HOGENOM" id="CLU_086499_3_2_14"/>
<dbReference type="InParanoid" id="P36255"/>
<dbReference type="OrthoDB" id="9811748at2"/>
<dbReference type="BioCyc" id="MGEN243273:G1GJ2-455-MONOMER"/>
<dbReference type="Proteomes" id="UP000000807">
    <property type="component" value="Chromosome"/>
</dbReference>
<dbReference type="GO" id="GO:0022625">
    <property type="term" value="C:cytosolic large ribosomal subunit"/>
    <property type="evidence" value="ECO:0000318"/>
    <property type="project" value="GO_Central"/>
</dbReference>
<dbReference type="GO" id="GO:0003729">
    <property type="term" value="F:mRNA binding"/>
    <property type="evidence" value="ECO:0000318"/>
    <property type="project" value="GO_Central"/>
</dbReference>
<dbReference type="GO" id="GO:0003735">
    <property type="term" value="F:structural constituent of ribosome"/>
    <property type="evidence" value="ECO:0000318"/>
    <property type="project" value="GO_Central"/>
</dbReference>
<dbReference type="GO" id="GO:0006412">
    <property type="term" value="P:translation"/>
    <property type="evidence" value="ECO:0000318"/>
    <property type="project" value="GO_Central"/>
</dbReference>
<dbReference type="CDD" id="cd00387">
    <property type="entry name" value="Ribosomal_L7_L12"/>
    <property type="match status" value="1"/>
</dbReference>
<dbReference type="Gene3D" id="3.30.1390.10">
    <property type="match status" value="1"/>
</dbReference>
<dbReference type="Gene3D" id="1.20.5.710">
    <property type="entry name" value="Single helix bin"/>
    <property type="match status" value="1"/>
</dbReference>
<dbReference type="HAMAP" id="MF_00368">
    <property type="entry name" value="Ribosomal_bL12"/>
    <property type="match status" value="1"/>
</dbReference>
<dbReference type="InterPro" id="IPR000206">
    <property type="entry name" value="Ribosomal_bL12"/>
</dbReference>
<dbReference type="InterPro" id="IPR013823">
    <property type="entry name" value="Ribosomal_bL12_C"/>
</dbReference>
<dbReference type="InterPro" id="IPR014719">
    <property type="entry name" value="Ribosomal_bL12_C/ClpS-like"/>
</dbReference>
<dbReference type="InterPro" id="IPR008932">
    <property type="entry name" value="Ribosomal_bL12_oligo"/>
</dbReference>
<dbReference type="InterPro" id="IPR036235">
    <property type="entry name" value="Ribosomal_bL12_oligo_N_sf"/>
</dbReference>
<dbReference type="NCBIfam" id="TIGR00855">
    <property type="entry name" value="L12"/>
    <property type="match status" value="1"/>
</dbReference>
<dbReference type="PANTHER" id="PTHR45987">
    <property type="entry name" value="39S RIBOSOMAL PROTEIN L12"/>
    <property type="match status" value="1"/>
</dbReference>
<dbReference type="PANTHER" id="PTHR45987:SF4">
    <property type="entry name" value="LARGE RIBOSOMAL SUBUNIT PROTEIN BL12M"/>
    <property type="match status" value="1"/>
</dbReference>
<dbReference type="Pfam" id="PF00542">
    <property type="entry name" value="Ribosomal_L12"/>
    <property type="match status" value="1"/>
</dbReference>
<dbReference type="Pfam" id="PF16320">
    <property type="entry name" value="Ribosomal_L12_N"/>
    <property type="match status" value="1"/>
</dbReference>
<dbReference type="SUPFAM" id="SSF54736">
    <property type="entry name" value="ClpS-like"/>
    <property type="match status" value="1"/>
</dbReference>
<dbReference type="SUPFAM" id="SSF48300">
    <property type="entry name" value="Ribosomal protein L7/12, oligomerisation (N-terminal) domain"/>
    <property type="match status" value="1"/>
</dbReference>
<comment type="function">
    <text evidence="1">Forms part of the ribosomal stalk which helps the ribosome interact with GTP-bound translation factors. Is thus essential for accurate translation.</text>
</comment>
<comment type="subunit">
    <text evidence="1">Homodimer. Part of the ribosomal stalk of the 50S ribosomal subunit. Forms a multimeric L10(L12)X complex, where L10 forms an elongated spine to which 2 to 4 L12 dimers bind in a sequential fashion. Binds GTP-bound translation factors.</text>
</comment>
<comment type="similarity">
    <text evidence="1">Belongs to the bacterial ribosomal protein bL12 family.</text>
</comment>
<accession>P36255</accession>
<proteinExistence type="inferred from homology"/>
<evidence type="ECO:0000255" key="1">
    <source>
        <dbReference type="HAMAP-Rule" id="MF_00368"/>
    </source>
</evidence>
<evidence type="ECO:0000305" key="2"/>
<organism>
    <name type="scientific">Mycoplasma genitalium (strain ATCC 33530 / DSM 19775 / NCTC 10195 / G37)</name>
    <name type="common">Mycoplasmoides genitalium</name>
    <dbReference type="NCBI Taxonomy" id="243273"/>
    <lineage>
        <taxon>Bacteria</taxon>
        <taxon>Bacillati</taxon>
        <taxon>Mycoplasmatota</taxon>
        <taxon>Mycoplasmoidales</taxon>
        <taxon>Mycoplasmoidaceae</taxon>
        <taxon>Mycoplasmoides</taxon>
    </lineage>
</organism>
<feature type="chain" id="PRO_0000157552" description="Large ribosomal subunit protein bL12">
    <location>
        <begin position="1"/>
        <end position="122"/>
    </location>
</feature>
<protein>
    <recommendedName>
        <fullName evidence="1">Large ribosomal subunit protein bL12</fullName>
    </recommendedName>
    <alternativeName>
        <fullName evidence="2">50S ribosomal protein L7/L12</fullName>
    </alternativeName>
</protein>
<name>RL7_MYCGE</name>
<keyword id="KW-1185">Reference proteome</keyword>
<keyword id="KW-0687">Ribonucleoprotein</keyword>
<keyword id="KW-0689">Ribosomal protein</keyword>
<gene>
    <name evidence="1" type="primary">rplL</name>
    <name type="synonym">rpl7</name>
    <name type="ordered locus">MG362</name>
</gene>
<reference key="1">
    <citation type="journal article" date="1995" name="Science">
        <title>The minimal gene complement of Mycoplasma genitalium.</title>
        <authorList>
            <person name="Fraser C.M."/>
            <person name="Gocayne J.D."/>
            <person name="White O."/>
            <person name="Adams M.D."/>
            <person name="Clayton R.A."/>
            <person name="Fleischmann R.D."/>
            <person name="Bult C.J."/>
            <person name="Kerlavage A.R."/>
            <person name="Sutton G.G."/>
            <person name="Kelley J.M."/>
            <person name="Fritchman J.L."/>
            <person name="Weidman J.F."/>
            <person name="Small K.V."/>
            <person name="Sandusky M."/>
            <person name="Fuhrmann J.L."/>
            <person name="Nguyen D.T."/>
            <person name="Utterback T.R."/>
            <person name="Saudek D.M."/>
            <person name="Phillips C.A."/>
            <person name="Merrick J.M."/>
            <person name="Tomb J.-F."/>
            <person name="Dougherty B.A."/>
            <person name="Bott K.F."/>
            <person name="Hu P.-C."/>
            <person name="Lucier T.S."/>
            <person name="Peterson S.N."/>
            <person name="Smith H.O."/>
            <person name="Hutchison C.A. III"/>
            <person name="Venter J.C."/>
        </authorList>
    </citation>
    <scope>NUCLEOTIDE SEQUENCE [LARGE SCALE GENOMIC DNA]</scope>
    <source>
        <strain>ATCC 33530 / DSM 19775 / NCTC 10195 / G37</strain>
    </source>
</reference>
<reference key="2">
    <citation type="journal article" date="1993" name="J. Bacteriol.">
        <title>A survey of the Mycoplasma genitalium genome by using random sequencing.</title>
        <authorList>
            <person name="Peterson S.N."/>
            <person name="Hu P.-C."/>
            <person name="Bott K.F."/>
            <person name="Hutchison C.A. III"/>
        </authorList>
    </citation>
    <scope>NUCLEOTIDE SEQUENCE [GENOMIC DNA] OF 1-35</scope>
    <source>
        <strain>ATCC 33530 / DSM 19775 / NCTC 10195 / G37</strain>
    </source>
</reference>
<sequence>MGKLDKKQLIESLKEMTIVEIDEIIKAVEEAFGVTATPIVAAGAAGATQEAASEVSVKVTGYADNAKLAVLKLYREITGVGLMEAKTAVEKLPCVVKQDIKPEEAEELKKRFVEVGATVEVK</sequence>